<feature type="chain" id="PRO_0000336079" description="Tetratricopeptide repeat protein 23-like">
    <location>
        <begin position="1"/>
        <end position="315"/>
    </location>
</feature>
<feature type="region of interest" description="Disordered" evidence="3">
    <location>
        <begin position="28"/>
        <end position="56"/>
    </location>
</feature>
<feature type="coiled-coil region" evidence="2">
    <location>
        <begin position="65"/>
        <end position="90"/>
    </location>
</feature>
<feature type="coiled-coil region" evidence="2">
    <location>
        <begin position="179"/>
        <end position="200"/>
    </location>
</feature>
<feature type="coiled-coil region" evidence="2">
    <location>
        <begin position="250"/>
        <end position="280"/>
    </location>
</feature>
<name>TT23L_BOVIN</name>
<proteinExistence type="evidence at transcript level"/>
<sequence>MRASPIRIPTVTSDTDWDFCFHLSQQTKIPEHQRTDESSPTSGSEESEEDTKAKEKVIDHMSHPREKLAQSQKKIAQLIKGKKNIEANKELIRCVTLSRIIFGEEHWKCAQALATLAYGYLTLRGLPAQAKKHAESAKNVLLTWKGTTTSDKEEKQILETLVMLYYTLGVVCLLQNHGREAYFNLQKSERNMKELRESYKGGTCGLQVSEKDLTVALGRASLANCRLNLALVYFEKAVDNVIANKGDSTSELVSLYQEIAQIEQLRRNHEQAIQYLHQAHSICVSLYTEVSPQAAEASALLAKAYAMSGEVQHKA</sequence>
<reference key="1">
    <citation type="submission" date="2007-06" db="EMBL/GenBank/DDBJ databases">
        <authorList>
            <consortium name="NIH - Mammalian Gene Collection (MGC) project"/>
        </authorList>
    </citation>
    <scope>NUCLEOTIDE SEQUENCE [LARGE SCALE MRNA]</scope>
    <source>
        <strain>Hereford</strain>
        <tissue>Uterus</tissue>
    </source>
</reference>
<protein>
    <recommendedName>
        <fullName>Tetratricopeptide repeat protein 23-like</fullName>
    </recommendedName>
</protein>
<dbReference type="EMBL" id="BC146201">
    <property type="protein sequence ID" value="AAI46202.1"/>
    <property type="status" value="ALT_INIT"/>
    <property type="molecule type" value="mRNA"/>
</dbReference>
<dbReference type="RefSeq" id="XP_015314597.1">
    <property type="nucleotide sequence ID" value="XM_015459111.1"/>
</dbReference>
<dbReference type="SMR" id="A6H7D1"/>
<dbReference type="FunCoup" id="A6H7D1">
    <property type="interactions" value="26"/>
</dbReference>
<dbReference type="STRING" id="9913.ENSBTAP00000056443"/>
<dbReference type="VEuPathDB" id="HostDB:ENSBTAG00000032933"/>
<dbReference type="InParanoid" id="A6H7D1"/>
<dbReference type="Proteomes" id="UP000009136">
    <property type="component" value="Chromosome 20"/>
</dbReference>
<dbReference type="Bgee" id="ENSBTAG00000032933">
    <property type="expression patterns" value="Expressed in semen and 93 other cell types or tissues"/>
</dbReference>
<dbReference type="GO" id="GO:0005813">
    <property type="term" value="C:centrosome"/>
    <property type="evidence" value="ECO:0007669"/>
    <property type="project" value="UniProtKB-SubCell"/>
</dbReference>
<dbReference type="GO" id="GO:0005737">
    <property type="term" value="C:cytoplasm"/>
    <property type="evidence" value="ECO:0007669"/>
    <property type="project" value="UniProtKB-KW"/>
</dbReference>
<dbReference type="GO" id="GO:0030496">
    <property type="term" value="C:midbody"/>
    <property type="evidence" value="ECO:0007669"/>
    <property type="project" value="UniProtKB-SubCell"/>
</dbReference>
<dbReference type="GO" id="GO:0005819">
    <property type="term" value="C:spindle"/>
    <property type="evidence" value="ECO:0007669"/>
    <property type="project" value="UniProtKB-SubCell"/>
</dbReference>
<dbReference type="Gene3D" id="1.25.40.10">
    <property type="entry name" value="Tetratricopeptide repeat domain"/>
    <property type="match status" value="1"/>
</dbReference>
<dbReference type="InterPro" id="IPR011990">
    <property type="entry name" value="TPR-like_helical_dom_sf"/>
</dbReference>
<dbReference type="InterPro" id="IPR042621">
    <property type="entry name" value="TTC23/TTC23L"/>
</dbReference>
<dbReference type="PANTHER" id="PTHR14485">
    <property type="entry name" value="TETRATRICOPEPTIDE REPEAT PROTEIN 23"/>
    <property type="match status" value="1"/>
</dbReference>
<dbReference type="PANTHER" id="PTHR14485:SF4">
    <property type="entry name" value="TETRATRICOPEPTIDE REPEAT PROTEIN 23-LIKE"/>
    <property type="match status" value="1"/>
</dbReference>
<dbReference type="SUPFAM" id="SSF48452">
    <property type="entry name" value="TPR-like"/>
    <property type="match status" value="1"/>
</dbReference>
<accession>A6H7D1</accession>
<keyword id="KW-0175">Coiled coil</keyword>
<keyword id="KW-0963">Cytoplasm</keyword>
<keyword id="KW-0206">Cytoskeleton</keyword>
<keyword id="KW-1185">Reference proteome</keyword>
<gene>
    <name type="primary">TTC23L</name>
</gene>
<evidence type="ECO:0000250" key="1">
    <source>
        <dbReference type="UniProtKB" id="Q6PF05"/>
    </source>
</evidence>
<evidence type="ECO:0000255" key="2"/>
<evidence type="ECO:0000256" key="3">
    <source>
        <dbReference type="SAM" id="MobiDB-lite"/>
    </source>
</evidence>
<evidence type="ECO:0000305" key="4"/>
<comment type="subcellular location">
    <subcellularLocation>
        <location evidence="1">Cytoplasm</location>
        <location evidence="1">Cytoskeleton</location>
        <location evidence="1">Microtubule organizing center</location>
        <location evidence="1">Centrosome</location>
    </subcellularLocation>
    <subcellularLocation>
        <location evidence="1">Cytoplasm</location>
        <location evidence="1">Cytoskeleton</location>
        <location evidence="1">Spindle</location>
    </subcellularLocation>
    <subcellularLocation>
        <location evidence="1">Midbody</location>
    </subcellularLocation>
    <text evidence="1">Exhibits dynamic subcellular localization during the cell cycle. In prophase cells, detected on split centrosomes. Translocates to the mitotic spindles during metaphase and early anaphase, then to the midbody and cleavage furrow in late anaphase.</text>
</comment>
<comment type="sequence caution" evidence="4">
    <conflict type="erroneous initiation">
        <sequence resource="EMBL-CDS" id="AAI46202"/>
    </conflict>
</comment>
<organism>
    <name type="scientific">Bos taurus</name>
    <name type="common">Bovine</name>
    <dbReference type="NCBI Taxonomy" id="9913"/>
    <lineage>
        <taxon>Eukaryota</taxon>
        <taxon>Metazoa</taxon>
        <taxon>Chordata</taxon>
        <taxon>Craniata</taxon>
        <taxon>Vertebrata</taxon>
        <taxon>Euteleostomi</taxon>
        <taxon>Mammalia</taxon>
        <taxon>Eutheria</taxon>
        <taxon>Laurasiatheria</taxon>
        <taxon>Artiodactyla</taxon>
        <taxon>Ruminantia</taxon>
        <taxon>Pecora</taxon>
        <taxon>Bovidae</taxon>
        <taxon>Bovinae</taxon>
        <taxon>Bos</taxon>
    </lineage>
</organism>